<protein>
    <recommendedName>
        <fullName evidence="1">Bifunctional protein FolD</fullName>
    </recommendedName>
    <domain>
        <recommendedName>
            <fullName evidence="1">Methylenetetrahydrofolate dehydrogenase</fullName>
            <ecNumber evidence="1">1.5.1.5</ecNumber>
        </recommendedName>
    </domain>
    <domain>
        <recommendedName>
            <fullName evidence="1">Methenyltetrahydrofolate cyclohydrolase</fullName>
            <ecNumber evidence="1">3.5.4.9</ecNumber>
        </recommendedName>
    </domain>
</protein>
<keyword id="KW-0028">Amino-acid biosynthesis</keyword>
<keyword id="KW-0368">Histidine biosynthesis</keyword>
<keyword id="KW-0378">Hydrolase</keyword>
<keyword id="KW-0486">Methionine biosynthesis</keyword>
<keyword id="KW-0511">Multifunctional enzyme</keyword>
<keyword id="KW-0521">NADP</keyword>
<keyword id="KW-0554">One-carbon metabolism</keyword>
<keyword id="KW-0560">Oxidoreductase</keyword>
<keyword id="KW-0658">Purine biosynthesis</keyword>
<keyword id="KW-1185">Reference proteome</keyword>
<comment type="function">
    <text evidence="1">Catalyzes the oxidation of 5,10-methylenetetrahydrofolate to 5,10-methenyltetrahydrofolate and then the hydrolysis of 5,10-methenyltetrahydrofolate to 10-formyltetrahydrofolate.</text>
</comment>
<comment type="catalytic activity">
    <reaction evidence="1">
        <text>(6R)-5,10-methylene-5,6,7,8-tetrahydrofolate + NADP(+) = (6R)-5,10-methenyltetrahydrofolate + NADPH</text>
        <dbReference type="Rhea" id="RHEA:22812"/>
        <dbReference type="ChEBI" id="CHEBI:15636"/>
        <dbReference type="ChEBI" id="CHEBI:57455"/>
        <dbReference type="ChEBI" id="CHEBI:57783"/>
        <dbReference type="ChEBI" id="CHEBI:58349"/>
        <dbReference type="EC" id="1.5.1.5"/>
    </reaction>
</comment>
<comment type="catalytic activity">
    <reaction evidence="1">
        <text>(6R)-5,10-methenyltetrahydrofolate + H2O = (6R)-10-formyltetrahydrofolate + H(+)</text>
        <dbReference type="Rhea" id="RHEA:23700"/>
        <dbReference type="ChEBI" id="CHEBI:15377"/>
        <dbReference type="ChEBI" id="CHEBI:15378"/>
        <dbReference type="ChEBI" id="CHEBI:57455"/>
        <dbReference type="ChEBI" id="CHEBI:195366"/>
        <dbReference type="EC" id="3.5.4.9"/>
    </reaction>
</comment>
<comment type="pathway">
    <text evidence="1">One-carbon metabolism; tetrahydrofolate interconversion.</text>
</comment>
<comment type="subunit">
    <text evidence="1">Homodimer.</text>
</comment>
<comment type="similarity">
    <text evidence="1">Belongs to the tetrahydrofolate dehydrogenase/cyclohydrolase family.</text>
</comment>
<reference key="1">
    <citation type="journal article" date="2009" name="PLoS Genet.">
        <title>Organised genome dynamics in the Escherichia coli species results in highly diverse adaptive paths.</title>
        <authorList>
            <person name="Touchon M."/>
            <person name="Hoede C."/>
            <person name="Tenaillon O."/>
            <person name="Barbe V."/>
            <person name="Baeriswyl S."/>
            <person name="Bidet P."/>
            <person name="Bingen E."/>
            <person name="Bonacorsi S."/>
            <person name="Bouchier C."/>
            <person name="Bouvet O."/>
            <person name="Calteau A."/>
            <person name="Chiapello H."/>
            <person name="Clermont O."/>
            <person name="Cruveiller S."/>
            <person name="Danchin A."/>
            <person name="Diard M."/>
            <person name="Dossat C."/>
            <person name="Karoui M.E."/>
            <person name="Frapy E."/>
            <person name="Garry L."/>
            <person name="Ghigo J.M."/>
            <person name="Gilles A.M."/>
            <person name="Johnson J."/>
            <person name="Le Bouguenec C."/>
            <person name="Lescat M."/>
            <person name="Mangenot S."/>
            <person name="Martinez-Jehanne V."/>
            <person name="Matic I."/>
            <person name="Nassif X."/>
            <person name="Oztas S."/>
            <person name="Petit M.A."/>
            <person name="Pichon C."/>
            <person name="Rouy Z."/>
            <person name="Ruf C.S."/>
            <person name="Schneider D."/>
            <person name="Tourret J."/>
            <person name="Vacherie B."/>
            <person name="Vallenet D."/>
            <person name="Medigue C."/>
            <person name="Rocha E.P.C."/>
            <person name="Denamur E."/>
        </authorList>
    </citation>
    <scope>NUCLEOTIDE SEQUENCE [LARGE SCALE GENOMIC DNA]</scope>
    <source>
        <strain>55989 / EAEC</strain>
    </source>
</reference>
<accession>B7L7F6</accession>
<evidence type="ECO:0000255" key="1">
    <source>
        <dbReference type="HAMAP-Rule" id="MF_01576"/>
    </source>
</evidence>
<dbReference type="EC" id="1.5.1.5" evidence="1"/>
<dbReference type="EC" id="3.5.4.9" evidence="1"/>
<dbReference type="EMBL" id="CU928145">
    <property type="protein sequence ID" value="CAU96416.1"/>
    <property type="molecule type" value="Genomic_DNA"/>
</dbReference>
<dbReference type="RefSeq" id="WP_000729154.1">
    <property type="nucleotide sequence ID" value="NC_011748.1"/>
</dbReference>
<dbReference type="SMR" id="B7L7F6"/>
<dbReference type="GeneID" id="75204395"/>
<dbReference type="KEGG" id="eck:EC55989_0543"/>
<dbReference type="HOGENOM" id="CLU_034045_2_1_6"/>
<dbReference type="UniPathway" id="UPA00193"/>
<dbReference type="Proteomes" id="UP000000746">
    <property type="component" value="Chromosome"/>
</dbReference>
<dbReference type="GO" id="GO:0005829">
    <property type="term" value="C:cytosol"/>
    <property type="evidence" value="ECO:0007669"/>
    <property type="project" value="TreeGrafter"/>
</dbReference>
<dbReference type="GO" id="GO:0004477">
    <property type="term" value="F:methenyltetrahydrofolate cyclohydrolase activity"/>
    <property type="evidence" value="ECO:0007669"/>
    <property type="project" value="UniProtKB-UniRule"/>
</dbReference>
<dbReference type="GO" id="GO:0004488">
    <property type="term" value="F:methylenetetrahydrofolate dehydrogenase (NADP+) activity"/>
    <property type="evidence" value="ECO:0007669"/>
    <property type="project" value="UniProtKB-UniRule"/>
</dbReference>
<dbReference type="GO" id="GO:0000105">
    <property type="term" value="P:L-histidine biosynthetic process"/>
    <property type="evidence" value="ECO:0007669"/>
    <property type="project" value="UniProtKB-KW"/>
</dbReference>
<dbReference type="GO" id="GO:0009086">
    <property type="term" value="P:methionine biosynthetic process"/>
    <property type="evidence" value="ECO:0007669"/>
    <property type="project" value="UniProtKB-KW"/>
</dbReference>
<dbReference type="GO" id="GO:0006164">
    <property type="term" value="P:purine nucleotide biosynthetic process"/>
    <property type="evidence" value="ECO:0007669"/>
    <property type="project" value="UniProtKB-KW"/>
</dbReference>
<dbReference type="GO" id="GO:0035999">
    <property type="term" value="P:tetrahydrofolate interconversion"/>
    <property type="evidence" value="ECO:0007669"/>
    <property type="project" value="UniProtKB-UniRule"/>
</dbReference>
<dbReference type="CDD" id="cd01080">
    <property type="entry name" value="NAD_bind_m-THF_DH_Cyclohyd"/>
    <property type="match status" value="1"/>
</dbReference>
<dbReference type="FunFam" id="3.40.50.10860:FF:000001">
    <property type="entry name" value="Bifunctional protein FolD"/>
    <property type="match status" value="1"/>
</dbReference>
<dbReference type="FunFam" id="3.40.50.720:FF:000006">
    <property type="entry name" value="Bifunctional protein FolD"/>
    <property type="match status" value="1"/>
</dbReference>
<dbReference type="Gene3D" id="3.40.50.10860">
    <property type="entry name" value="Leucine Dehydrogenase, chain A, domain 1"/>
    <property type="match status" value="1"/>
</dbReference>
<dbReference type="Gene3D" id="3.40.50.720">
    <property type="entry name" value="NAD(P)-binding Rossmann-like Domain"/>
    <property type="match status" value="1"/>
</dbReference>
<dbReference type="HAMAP" id="MF_01576">
    <property type="entry name" value="THF_DHG_CYH"/>
    <property type="match status" value="1"/>
</dbReference>
<dbReference type="InterPro" id="IPR046346">
    <property type="entry name" value="Aminoacid_DH-like_N_sf"/>
</dbReference>
<dbReference type="InterPro" id="IPR036291">
    <property type="entry name" value="NAD(P)-bd_dom_sf"/>
</dbReference>
<dbReference type="InterPro" id="IPR000672">
    <property type="entry name" value="THF_DH/CycHdrlase"/>
</dbReference>
<dbReference type="InterPro" id="IPR020630">
    <property type="entry name" value="THF_DH/CycHdrlase_cat_dom"/>
</dbReference>
<dbReference type="InterPro" id="IPR020867">
    <property type="entry name" value="THF_DH/CycHdrlase_CS"/>
</dbReference>
<dbReference type="InterPro" id="IPR020631">
    <property type="entry name" value="THF_DH/CycHdrlase_NAD-bd_dom"/>
</dbReference>
<dbReference type="NCBIfam" id="NF008058">
    <property type="entry name" value="PRK10792.1"/>
    <property type="match status" value="1"/>
</dbReference>
<dbReference type="NCBIfam" id="NF010783">
    <property type="entry name" value="PRK14186.1"/>
    <property type="match status" value="1"/>
</dbReference>
<dbReference type="PANTHER" id="PTHR48099:SF5">
    <property type="entry name" value="C-1-TETRAHYDROFOLATE SYNTHASE, CYTOPLASMIC"/>
    <property type="match status" value="1"/>
</dbReference>
<dbReference type="PANTHER" id="PTHR48099">
    <property type="entry name" value="C-1-TETRAHYDROFOLATE SYNTHASE, CYTOPLASMIC-RELATED"/>
    <property type="match status" value="1"/>
</dbReference>
<dbReference type="Pfam" id="PF00763">
    <property type="entry name" value="THF_DHG_CYH"/>
    <property type="match status" value="1"/>
</dbReference>
<dbReference type="Pfam" id="PF02882">
    <property type="entry name" value="THF_DHG_CYH_C"/>
    <property type="match status" value="1"/>
</dbReference>
<dbReference type="PRINTS" id="PR00085">
    <property type="entry name" value="THFDHDRGNASE"/>
</dbReference>
<dbReference type="SUPFAM" id="SSF53223">
    <property type="entry name" value="Aminoacid dehydrogenase-like, N-terminal domain"/>
    <property type="match status" value="1"/>
</dbReference>
<dbReference type="SUPFAM" id="SSF51735">
    <property type="entry name" value="NAD(P)-binding Rossmann-fold domains"/>
    <property type="match status" value="1"/>
</dbReference>
<dbReference type="PROSITE" id="PS00766">
    <property type="entry name" value="THF_DHG_CYH_1"/>
    <property type="match status" value="1"/>
</dbReference>
<dbReference type="PROSITE" id="PS00767">
    <property type="entry name" value="THF_DHG_CYH_2"/>
    <property type="match status" value="1"/>
</dbReference>
<gene>
    <name evidence="1" type="primary">folD</name>
    <name type="ordered locus">EC55989_0543</name>
</gene>
<name>FOLD_ECO55</name>
<sequence length="288" mass="31014">MAAKIIDGKTIAQQVRSEVAQKVQARIAAGLRAPGLAVVLVGSNPASQIYVASKRKACEEVGFVSRSYDLPETTSEAELLELIDALNADNTIDGILVQLPLPAGIDNVKVLERIHPDKDVDGFHPYNVGRLCQRAPRLRPCTPRGIVTLLERYNIDTFGLNAVVIGASNIVGRPMSMELLLAGCTTTVTHRFTKNLRHHVENADLLIVAVGKPGFIPGDWIKEGAIVIDVGINRLENGKVVGDVVFEDAAKRASYITPVPGGVGPMTVATLIENTLQACVEYHDPQDE</sequence>
<feature type="chain" id="PRO_1000185612" description="Bifunctional protein FolD">
    <location>
        <begin position="1"/>
        <end position="288"/>
    </location>
</feature>
<feature type="binding site" evidence="1">
    <location>
        <begin position="166"/>
        <end position="168"/>
    </location>
    <ligand>
        <name>NADP(+)</name>
        <dbReference type="ChEBI" id="CHEBI:58349"/>
    </ligand>
</feature>
<feature type="binding site" evidence="1">
    <location>
        <position position="232"/>
    </location>
    <ligand>
        <name>NADP(+)</name>
        <dbReference type="ChEBI" id="CHEBI:58349"/>
    </ligand>
</feature>
<proteinExistence type="inferred from homology"/>
<organism>
    <name type="scientific">Escherichia coli (strain 55989 / EAEC)</name>
    <dbReference type="NCBI Taxonomy" id="585055"/>
    <lineage>
        <taxon>Bacteria</taxon>
        <taxon>Pseudomonadati</taxon>
        <taxon>Pseudomonadota</taxon>
        <taxon>Gammaproteobacteria</taxon>
        <taxon>Enterobacterales</taxon>
        <taxon>Enterobacteriaceae</taxon>
        <taxon>Escherichia</taxon>
    </lineage>
</organism>